<proteinExistence type="inferred from homology"/>
<reference key="1">
    <citation type="journal article" date="2015" name="Genome Announc.">
        <title>Genome sequence of the AIDS-associated pathogen Penicillium marneffei (ATCC18224) and its near taxonomic relative Talaromyces stipitatus (ATCC10500).</title>
        <authorList>
            <person name="Nierman W.C."/>
            <person name="Fedorova-Abrams N.D."/>
            <person name="Andrianopoulos A."/>
        </authorList>
    </citation>
    <scope>NUCLEOTIDE SEQUENCE [LARGE SCALE GENOMIC DNA]</scope>
    <source>
        <strain>ATCC 10500 / CBS 375.48 / QM 6759 / NRRL 1006</strain>
    </source>
</reference>
<sequence length="341" mass="39405">MAISDALNKRLRARRDEEDDFEDEVSDEMEDIDKDDESNSDVDRPNSESEESAELEEGSEEEDDDDDDISDNQSTASTNDKKALQSEFRQISFGALAKAQNSISKKRKRGEEPETDDKTQSTLNDIRERLRKAREQKLGLTRDNETKNNNSGGHSKPKPPTRSSKHAPTVQSSKMAVSRKRIVIEPPSNATKPRDPRFDPAVSSSSARRNSTSNAYTFLDEYRASEIKQLKDQLARTKDPKQREELKRQLTSAEDRQRTLENKKREREVLREHKQREKQLIKEGKKSQPYFLKKSELKKEVLKKKYESMGSRQRTKALERRRKKIAAKGKKDLPWARRGVE</sequence>
<protein>
    <recommendedName>
        <fullName>rRNA biogenesis protein rrp36</fullName>
    </recommendedName>
    <alternativeName>
        <fullName>Ribosomal RNA-processing protein 36</fullName>
    </alternativeName>
</protein>
<accession>B8MSM6</accession>
<feature type="chain" id="PRO_0000397663" description="rRNA biogenesis protein rrp36">
    <location>
        <begin position="1"/>
        <end position="341"/>
    </location>
</feature>
<feature type="region of interest" description="Disordered" evidence="3">
    <location>
        <begin position="1"/>
        <end position="216"/>
    </location>
</feature>
<feature type="region of interest" description="Disordered" evidence="3">
    <location>
        <begin position="232"/>
        <end position="288"/>
    </location>
</feature>
<feature type="region of interest" description="Disordered" evidence="3">
    <location>
        <begin position="304"/>
        <end position="341"/>
    </location>
</feature>
<feature type="coiled-coil region" evidence="2">
    <location>
        <begin position="116"/>
        <end position="150"/>
    </location>
</feature>
<feature type="coiled-coil region" evidence="2">
    <location>
        <begin position="241"/>
        <end position="283"/>
    </location>
</feature>
<feature type="compositionally biased region" description="Acidic residues" evidence="3">
    <location>
        <begin position="17"/>
        <end position="40"/>
    </location>
</feature>
<feature type="compositionally biased region" description="Acidic residues" evidence="3">
    <location>
        <begin position="48"/>
        <end position="70"/>
    </location>
</feature>
<feature type="compositionally biased region" description="Basic and acidic residues" evidence="3">
    <location>
        <begin position="109"/>
        <end position="146"/>
    </location>
</feature>
<feature type="compositionally biased region" description="Basic residues" evidence="3">
    <location>
        <begin position="155"/>
        <end position="165"/>
    </location>
</feature>
<feature type="compositionally biased region" description="Low complexity" evidence="3">
    <location>
        <begin position="203"/>
        <end position="215"/>
    </location>
</feature>
<feature type="compositionally biased region" description="Basic and acidic residues" evidence="3">
    <location>
        <begin position="232"/>
        <end position="286"/>
    </location>
</feature>
<feature type="compositionally biased region" description="Basic residues" evidence="3">
    <location>
        <begin position="313"/>
        <end position="328"/>
    </location>
</feature>
<feature type="compositionally biased region" description="Basic and acidic residues" evidence="3">
    <location>
        <begin position="329"/>
        <end position="341"/>
    </location>
</feature>
<evidence type="ECO:0000250" key="1"/>
<evidence type="ECO:0000255" key="2"/>
<evidence type="ECO:0000256" key="3">
    <source>
        <dbReference type="SAM" id="MobiDB-lite"/>
    </source>
</evidence>
<evidence type="ECO:0000305" key="4"/>
<dbReference type="EMBL" id="EQ962660">
    <property type="protein sequence ID" value="EED12463.1"/>
    <property type="molecule type" value="Genomic_DNA"/>
</dbReference>
<dbReference type="RefSeq" id="XP_002488117.1">
    <property type="nucleotide sequence ID" value="XM_002488072.1"/>
</dbReference>
<dbReference type="SMR" id="B8MSM6"/>
<dbReference type="FunCoup" id="B8MSM6">
    <property type="interactions" value="548"/>
</dbReference>
<dbReference type="STRING" id="441959.B8MSM6"/>
<dbReference type="GeneID" id="8104485"/>
<dbReference type="VEuPathDB" id="FungiDB:TSTA_005010"/>
<dbReference type="eggNOG" id="KOG3190">
    <property type="taxonomic scope" value="Eukaryota"/>
</dbReference>
<dbReference type="HOGENOM" id="CLU_048802_0_0_1"/>
<dbReference type="InParanoid" id="B8MSM6"/>
<dbReference type="OMA" id="ERKEMPW"/>
<dbReference type="OrthoDB" id="448446at2759"/>
<dbReference type="PhylomeDB" id="B8MSM6"/>
<dbReference type="Proteomes" id="UP000001745">
    <property type="component" value="Unassembled WGS sequence"/>
</dbReference>
<dbReference type="GO" id="GO:0030686">
    <property type="term" value="C:90S preribosome"/>
    <property type="evidence" value="ECO:0007669"/>
    <property type="project" value="TreeGrafter"/>
</dbReference>
<dbReference type="GO" id="GO:0005730">
    <property type="term" value="C:nucleolus"/>
    <property type="evidence" value="ECO:0007669"/>
    <property type="project" value="UniProtKB-SubCell"/>
</dbReference>
<dbReference type="GO" id="GO:0000462">
    <property type="term" value="P:maturation of SSU-rRNA from tricistronic rRNA transcript (SSU-rRNA, 5.8S rRNA, LSU-rRNA)"/>
    <property type="evidence" value="ECO:0007669"/>
    <property type="project" value="TreeGrafter"/>
</dbReference>
<dbReference type="InterPro" id="IPR009292">
    <property type="entry name" value="RRP36"/>
</dbReference>
<dbReference type="PANTHER" id="PTHR21738">
    <property type="entry name" value="RIBOSOMAL RNA PROCESSING PROTEIN 36 HOMOLOG"/>
    <property type="match status" value="1"/>
</dbReference>
<dbReference type="PANTHER" id="PTHR21738:SF0">
    <property type="entry name" value="RIBOSOMAL RNA PROCESSING PROTEIN 36 HOMOLOG"/>
    <property type="match status" value="1"/>
</dbReference>
<dbReference type="Pfam" id="PF06102">
    <property type="entry name" value="RRP36"/>
    <property type="match status" value="1"/>
</dbReference>
<organism>
    <name type="scientific">Talaromyces stipitatus (strain ATCC 10500 / CBS 375.48 / QM 6759 / NRRL 1006)</name>
    <name type="common">Penicillium stipitatum</name>
    <dbReference type="NCBI Taxonomy" id="441959"/>
    <lineage>
        <taxon>Eukaryota</taxon>
        <taxon>Fungi</taxon>
        <taxon>Dikarya</taxon>
        <taxon>Ascomycota</taxon>
        <taxon>Pezizomycotina</taxon>
        <taxon>Eurotiomycetes</taxon>
        <taxon>Eurotiomycetidae</taxon>
        <taxon>Eurotiales</taxon>
        <taxon>Trichocomaceae</taxon>
        <taxon>Talaromyces</taxon>
        <taxon>Talaromyces sect. Talaromyces</taxon>
    </lineage>
</organism>
<gene>
    <name type="primary">rrp36</name>
    <name type="ORF">TSTA_005010</name>
</gene>
<keyword id="KW-0175">Coiled coil</keyword>
<keyword id="KW-0539">Nucleus</keyword>
<keyword id="KW-1185">Reference proteome</keyword>
<keyword id="KW-0687">Ribonucleoprotein</keyword>
<keyword id="KW-0690">Ribosome biogenesis</keyword>
<keyword id="KW-0698">rRNA processing</keyword>
<name>RRP36_TALSN</name>
<comment type="function">
    <text evidence="1">Component of the 90S pre-ribosome involved in the maturation of rRNAs. Required for early cleavages of the pre-RNAs in the 40S ribosomal subunit maturation pathway (By similarity).</text>
</comment>
<comment type="subunit">
    <text evidence="1">Associates with 90S and pre-40S pre-ribosomal particles.</text>
</comment>
<comment type="subcellular location">
    <subcellularLocation>
        <location evidence="1">Nucleus</location>
        <location evidence="1">Nucleolus</location>
    </subcellularLocation>
</comment>
<comment type="similarity">
    <text evidence="4">Belongs to the RRP36 family.</text>
</comment>